<feature type="chain" id="PRO_0000312712" description="Uncharacterized mitochondrial protein Mp05">
    <location>
        <begin position="1"/>
        <end position="388"/>
    </location>
</feature>
<comment type="subcellular location">
    <subcellularLocation>
        <location>Mitochondrion</location>
    </subcellularLocation>
</comment>
<reference key="1">
    <citation type="journal article" date="2008" name="Mol. Biol. Evol.">
        <title>Mitochondrial genome evolution in the social amoebae.</title>
        <authorList>
            <person name="Heidel A.J."/>
            <person name="Gloeckner G."/>
        </authorList>
    </citation>
    <scope>NUCLEOTIDE SEQUENCE [LARGE SCALE GENOMIC DNA]</scope>
</reference>
<proteinExistence type="predicted"/>
<protein>
    <recommendedName>
        <fullName>Uncharacterized mitochondrial protein Mp05</fullName>
    </recommendedName>
    <alternativeName>
        <fullName>ORF388</fullName>
    </alternativeName>
</protein>
<sequence>MRKSQKLAFRKGQFRITDITGVSLRGEIIKQIIKPTIHAVFDVAVEEMDHDVDDIEILFITREEEEERRREDPDLYRLDAWDREVLKKTSMDEHNYKSPINCIYEYDYDVLQPVANFEEFFEIDFDHVPLWKVDIYGDFAFYGSDPYIKETKEYPEEYISDEKRSEVELDYLLYNSTKLEQHRQYIIKNKEHFTDVKPQILETGERAEHLLMKRFYYNKIDNVIERKQEIEEDPIYTYIKFDFGAKLDLRIARLYYLNFTRMERMDLENQQKLYEFEKAALKGIAFDNFMILFGVFLIWATHPYLYKKIPWRIRYFFEFHRDEVIEYILMIPQIPKITWEEIKAYWTGQVMFTVIPTFQYAWSFLGKKIDLETIQAWKILAKTLNDIY</sequence>
<dbReference type="EMBL" id="DQ336395">
    <property type="protein sequence ID" value="ABC60393.1"/>
    <property type="molecule type" value="Genomic_DNA"/>
</dbReference>
<dbReference type="RefSeq" id="YP_492642.2">
    <property type="nucleotide sequence ID" value="NC_007787.2"/>
</dbReference>
<dbReference type="SMR" id="Q2LCQ0"/>
<dbReference type="GeneID" id="3912630"/>
<dbReference type="GO" id="GO:0005739">
    <property type="term" value="C:mitochondrion"/>
    <property type="evidence" value="ECO:0007669"/>
    <property type="project" value="UniProtKB-SubCell"/>
</dbReference>
<organism>
    <name type="scientific">Dictyostelium citrinum</name>
    <name type="common">Slime mold</name>
    <dbReference type="NCBI Taxonomy" id="361072"/>
    <lineage>
        <taxon>Eukaryota</taxon>
        <taxon>Amoebozoa</taxon>
        <taxon>Evosea</taxon>
        <taxon>Eumycetozoa</taxon>
        <taxon>Dictyostelia</taxon>
        <taxon>Dictyosteliales</taxon>
        <taxon>Dictyosteliaceae</taxon>
        <taxon>Dictyostelium</taxon>
    </lineage>
</organism>
<geneLocation type="mitochondrion"/>
<keyword id="KW-0496">Mitochondrion</keyword>
<accession>Q2LCQ0</accession>
<name>MP05_DICCI</name>